<accession>A9M3Q1</accession>
<proteinExistence type="inferred from homology"/>
<dbReference type="EC" id="3.4.24.-" evidence="1"/>
<dbReference type="EMBL" id="CP000381">
    <property type="protein sequence ID" value="ABX72976.1"/>
    <property type="molecule type" value="Genomic_DNA"/>
</dbReference>
<dbReference type="RefSeq" id="WP_010357358.1">
    <property type="nucleotide sequence ID" value="NC_010120.1"/>
</dbReference>
<dbReference type="SMR" id="A9M3Q1"/>
<dbReference type="MEROPS" id="M48.002"/>
<dbReference type="GeneID" id="66752737"/>
<dbReference type="KEGG" id="nmn:NMCC_0783"/>
<dbReference type="HOGENOM" id="CLU_042266_1_0_4"/>
<dbReference type="Proteomes" id="UP000001177">
    <property type="component" value="Chromosome"/>
</dbReference>
<dbReference type="GO" id="GO:0005886">
    <property type="term" value="C:plasma membrane"/>
    <property type="evidence" value="ECO:0007669"/>
    <property type="project" value="UniProtKB-SubCell"/>
</dbReference>
<dbReference type="GO" id="GO:0004222">
    <property type="term" value="F:metalloendopeptidase activity"/>
    <property type="evidence" value="ECO:0007669"/>
    <property type="project" value="UniProtKB-UniRule"/>
</dbReference>
<dbReference type="GO" id="GO:0008270">
    <property type="term" value="F:zinc ion binding"/>
    <property type="evidence" value="ECO:0007669"/>
    <property type="project" value="UniProtKB-UniRule"/>
</dbReference>
<dbReference type="GO" id="GO:0006508">
    <property type="term" value="P:proteolysis"/>
    <property type="evidence" value="ECO:0007669"/>
    <property type="project" value="UniProtKB-KW"/>
</dbReference>
<dbReference type="CDD" id="cd07335">
    <property type="entry name" value="M48B_HtpX_like"/>
    <property type="match status" value="1"/>
</dbReference>
<dbReference type="Gene3D" id="3.30.2010.10">
    <property type="entry name" value="Metalloproteases ('zincins'), catalytic domain"/>
    <property type="match status" value="1"/>
</dbReference>
<dbReference type="HAMAP" id="MF_00188">
    <property type="entry name" value="Pept_M48_protease_HtpX"/>
    <property type="match status" value="1"/>
</dbReference>
<dbReference type="InterPro" id="IPR050083">
    <property type="entry name" value="HtpX_protease"/>
</dbReference>
<dbReference type="InterPro" id="IPR022919">
    <property type="entry name" value="Pept_M48_protease_HtpX"/>
</dbReference>
<dbReference type="InterPro" id="IPR001915">
    <property type="entry name" value="Peptidase_M48"/>
</dbReference>
<dbReference type="NCBIfam" id="NF003965">
    <property type="entry name" value="PRK05457.1"/>
    <property type="match status" value="1"/>
</dbReference>
<dbReference type="PANTHER" id="PTHR43221">
    <property type="entry name" value="PROTEASE HTPX"/>
    <property type="match status" value="1"/>
</dbReference>
<dbReference type="PANTHER" id="PTHR43221:SF1">
    <property type="entry name" value="PROTEASE HTPX"/>
    <property type="match status" value="1"/>
</dbReference>
<dbReference type="Pfam" id="PF01435">
    <property type="entry name" value="Peptidase_M48"/>
    <property type="match status" value="1"/>
</dbReference>
<dbReference type="PROSITE" id="PS00142">
    <property type="entry name" value="ZINC_PROTEASE"/>
    <property type="match status" value="1"/>
</dbReference>
<sequence>MKRIFLFLATNIAVLVVINIVLAVLGINSRGGAGSLLAYSAVVGFTGSIISLLMSKFIAKQSVGAEVIDTPRTEEEAWLLNTVEAQARQWNLKTPEVAIYHSPEPNAFATGASRNSSLIAVSTGLLDHMTRDEVEAVLAHEMAHVGNGDMVTLTLIQGVVNTFVVFLSRIIANLIARNNDGSQSQGTYFLVSMVFQILFGFLASLIVMWFSRQREYRADAGAAKLVGAPKMISALQRLKGNPVDLPEEMNAMGIAGDTRDSLLSTHPSLDNRIARLKSL</sequence>
<organism>
    <name type="scientific">Neisseria meningitidis serogroup C (strain 053442)</name>
    <dbReference type="NCBI Taxonomy" id="374833"/>
    <lineage>
        <taxon>Bacteria</taxon>
        <taxon>Pseudomonadati</taxon>
        <taxon>Pseudomonadota</taxon>
        <taxon>Betaproteobacteria</taxon>
        <taxon>Neisseriales</taxon>
        <taxon>Neisseriaceae</taxon>
        <taxon>Neisseria</taxon>
    </lineage>
</organism>
<evidence type="ECO:0000255" key="1">
    <source>
        <dbReference type="HAMAP-Rule" id="MF_00188"/>
    </source>
</evidence>
<protein>
    <recommendedName>
        <fullName evidence="1">Protease HtpX homolog</fullName>
        <ecNumber evidence="1">3.4.24.-</ecNumber>
    </recommendedName>
</protein>
<feature type="chain" id="PRO_1000077472" description="Protease HtpX homolog">
    <location>
        <begin position="1"/>
        <end position="279"/>
    </location>
</feature>
<feature type="transmembrane region" description="Helical" evidence="1">
    <location>
        <begin position="4"/>
        <end position="24"/>
    </location>
</feature>
<feature type="transmembrane region" description="Helical" evidence="1">
    <location>
        <begin position="34"/>
        <end position="54"/>
    </location>
</feature>
<feature type="transmembrane region" description="Helical" evidence="1">
    <location>
        <begin position="155"/>
        <end position="175"/>
    </location>
</feature>
<feature type="transmembrane region" description="Helical" evidence="1">
    <location>
        <begin position="189"/>
        <end position="209"/>
    </location>
</feature>
<feature type="active site" evidence="1">
    <location>
        <position position="141"/>
    </location>
</feature>
<feature type="binding site" evidence="1">
    <location>
        <position position="140"/>
    </location>
    <ligand>
        <name>Zn(2+)</name>
        <dbReference type="ChEBI" id="CHEBI:29105"/>
        <note>catalytic</note>
    </ligand>
</feature>
<feature type="binding site" evidence="1">
    <location>
        <position position="144"/>
    </location>
    <ligand>
        <name>Zn(2+)</name>
        <dbReference type="ChEBI" id="CHEBI:29105"/>
        <note>catalytic</note>
    </ligand>
</feature>
<feature type="binding site" evidence="1">
    <location>
        <position position="215"/>
    </location>
    <ligand>
        <name>Zn(2+)</name>
        <dbReference type="ChEBI" id="CHEBI:29105"/>
        <note>catalytic</note>
    </ligand>
</feature>
<name>HTPX_NEIM0</name>
<keyword id="KW-0997">Cell inner membrane</keyword>
<keyword id="KW-1003">Cell membrane</keyword>
<keyword id="KW-0378">Hydrolase</keyword>
<keyword id="KW-0472">Membrane</keyword>
<keyword id="KW-0479">Metal-binding</keyword>
<keyword id="KW-0482">Metalloprotease</keyword>
<keyword id="KW-0645">Protease</keyword>
<keyword id="KW-0812">Transmembrane</keyword>
<keyword id="KW-1133">Transmembrane helix</keyword>
<keyword id="KW-0862">Zinc</keyword>
<comment type="cofactor">
    <cofactor evidence="1">
        <name>Zn(2+)</name>
        <dbReference type="ChEBI" id="CHEBI:29105"/>
    </cofactor>
    <text evidence="1">Binds 1 zinc ion per subunit.</text>
</comment>
<comment type="subcellular location">
    <subcellularLocation>
        <location evidence="1">Cell inner membrane</location>
        <topology evidence="1">Multi-pass membrane protein</topology>
    </subcellularLocation>
</comment>
<comment type="similarity">
    <text evidence="1">Belongs to the peptidase M48B family.</text>
</comment>
<reference key="1">
    <citation type="journal article" date="2008" name="Genomics">
        <title>Characterization of ST-4821 complex, a unique Neisseria meningitidis clone.</title>
        <authorList>
            <person name="Peng J."/>
            <person name="Yang L."/>
            <person name="Yang F."/>
            <person name="Yang J."/>
            <person name="Yan Y."/>
            <person name="Nie H."/>
            <person name="Zhang X."/>
            <person name="Xiong Z."/>
            <person name="Jiang Y."/>
            <person name="Cheng F."/>
            <person name="Xu X."/>
            <person name="Chen S."/>
            <person name="Sun L."/>
            <person name="Li W."/>
            <person name="Shen Y."/>
            <person name="Shao Z."/>
            <person name="Liang X."/>
            <person name="Xu J."/>
            <person name="Jin Q."/>
        </authorList>
    </citation>
    <scope>NUCLEOTIDE SEQUENCE [LARGE SCALE GENOMIC DNA]</scope>
    <source>
        <strain>053442</strain>
    </source>
</reference>
<gene>
    <name evidence="1" type="primary">htpX</name>
    <name type="ordered locus">NMCC_0783</name>
</gene>